<accession>Q5HDX6</accession>
<dbReference type="EMBL" id="CP000046">
    <property type="protein sequence ID" value="AAW37096.1"/>
    <property type="molecule type" value="Genomic_DNA"/>
</dbReference>
<dbReference type="RefSeq" id="WP_001096577.1">
    <property type="nucleotide sequence ID" value="NZ_JBGOFO010000004.1"/>
</dbReference>
<dbReference type="SMR" id="Q5HDX6"/>
<dbReference type="KEGG" id="sac:SACOL2221"/>
<dbReference type="HOGENOM" id="CLU_131047_2_1_9"/>
<dbReference type="Proteomes" id="UP000000530">
    <property type="component" value="Chromosome"/>
</dbReference>
<dbReference type="GO" id="GO:0022625">
    <property type="term" value="C:cytosolic large ribosomal subunit"/>
    <property type="evidence" value="ECO:0007669"/>
    <property type="project" value="TreeGrafter"/>
</dbReference>
<dbReference type="GO" id="GO:0003735">
    <property type="term" value="F:structural constituent of ribosome"/>
    <property type="evidence" value="ECO:0007669"/>
    <property type="project" value="InterPro"/>
</dbReference>
<dbReference type="GO" id="GO:0006412">
    <property type="term" value="P:translation"/>
    <property type="evidence" value="ECO:0007669"/>
    <property type="project" value="UniProtKB-UniRule"/>
</dbReference>
<dbReference type="CDD" id="cd01658">
    <property type="entry name" value="Ribosomal_L30"/>
    <property type="match status" value="1"/>
</dbReference>
<dbReference type="FunFam" id="3.30.1390.20:FF:000001">
    <property type="entry name" value="50S ribosomal protein L30"/>
    <property type="match status" value="1"/>
</dbReference>
<dbReference type="Gene3D" id="3.30.1390.20">
    <property type="entry name" value="Ribosomal protein L30, ferredoxin-like fold domain"/>
    <property type="match status" value="1"/>
</dbReference>
<dbReference type="HAMAP" id="MF_01371_B">
    <property type="entry name" value="Ribosomal_uL30_B"/>
    <property type="match status" value="1"/>
</dbReference>
<dbReference type="InterPro" id="IPR036919">
    <property type="entry name" value="Ribo_uL30_ferredoxin-like_sf"/>
</dbReference>
<dbReference type="InterPro" id="IPR005996">
    <property type="entry name" value="Ribosomal_uL30_bac-type"/>
</dbReference>
<dbReference type="InterPro" id="IPR016082">
    <property type="entry name" value="Ribosomal_uL30_ferredoxin-like"/>
</dbReference>
<dbReference type="NCBIfam" id="TIGR01308">
    <property type="entry name" value="rpmD_bact"/>
    <property type="match status" value="1"/>
</dbReference>
<dbReference type="PANTHER" id="PTHR15892:SF2">
    <property type="entry name" value="LARGE RIBOSOMAL SUBUNIT PROTEIN UL30M"/>
    <property type="match status" value="1"/>
</dbReference>
<dbReference type="PANTHER" id="PTHR15892">
    <property type="entry name" value="MITOCHONDRIAL RIBOSOMAL PROTEIN L30"/>
    <property type="match status" value="1"/>
</dbReference>
<dbReference type="Pfam" id="PF00327">
    <property type="entry name" value="Ribosomal_L30"/>
    <property type="match status" value="1"/>
</dbReference>
<dbReference type="PIRSF" id="PIRSF002211">
    <property type="entry name" value="Ribosomal_L30_bac-type"/>
    <property type="match status" value="1"/>
</dbReference>
<dbReference type="SUPFAM" id="SSF55129">
    <property type="entry name" value="Ribosomal protein L30p/L7e"/>
    <property type="match status" value="1"/>
</dbReference>
<name>RL30_STAAC</name>
<feature type="chain" id="PRO_0000104605" description="Large ribosomal subunit protein uL30">
    <location>
        <begin position="1"/>
        <end position="59"/>
    </location>
</feature>
<reference key="1">
    <citation type="journal article" date="2005" name="J. Bacteriol.">
        <title>Insights on evolution of virulence and resistance from the complete genome analysis of an early methicillin-resistant Staphylococcus aureus strain and a biofilm-producing methicillin-resistant Staphylococcus epidermidis strain.</title>
        <authorList>
            <person name="Gill S.R."/>
            <person name="Fouts D.E."/>
            <person name="Archer G.L."/>
            <person name="Mongodin E.F."/>
            <person name="DeBoy R.T."/>
            <person name="Ravel J."/>
            <person name="Paulsen I.T."/>
            <person name="Kolonay J.F."/>
            <person name="Brinkac L.M."/>
            <person name="Beanan M.J."/>
            <person name="Dodson R.J."/>
            <person name="Daugherty S.C."/>
            <person name="Madupu R."/>
            <person name="Angiuoli S.V."/>
            <person name="Durkin A.S."/>
            <person name="Haft D.H."/>
            <person name="Vamathevan J.J."/>
            <person name="Khouri H."/>
            <person name="Utterback T.R."/>
            <person name="Lee C."/>
            <person name="Dimitrov G."/>
            <person name="Jiang L."/>
            <person name="Qin H."/>
            <person name="Weidman J."/>
            <person name="Tran K."/>
            <person name="Kang K.H."/>
            <person name="Hance I.R."/>
            <person name="Nelson K.E."/>
            <person name="Fraser C.M."/>
        </authorList>
    </citation>
    <scope>NUCLEOTIDE SEQUENCE [LARGE SCALE GENOMIC DNA]</scope>
    <source>
        <strain>COL</strain>
    </source>
</reference>
<proteinExistence type="inferred from homology"/>
<gene>
    <name evidence="1" type="primary">rpmD</name>
    <name type="ordered locus">SACOL2221</name>
</gene>
<sequence length="59" mass="6554">MAKLQITLTRSVIGRPETQRKTVEALGLKKTNSSVVVEDNPAIRGQINKVKHLVTVEEK</sequence>
<keyword id="KW-0687">Ribonucleoprotein</keyword>
<keyword id="KW-0689">Ribosomal protein</keyword>
<evidence type="ECO:0000255" key="1">
    <source>
        <dbReference type="HAMAP-Rule" id="MF_01371"/>
    </source>
</evidence>
<evidence type="ECO:0000305" key="2"/>
<comment type="subunit">
    <text evidence="1">Part of the 50S ribosomal subunit.</text>
</comment>
<comment type="similarity">
    <text evidence="1">Belongs to the universal ribosomal protein uL30 family.</text>
</comment>
<organism>
    <name type="scientific">Staphylococcus aureus (strain COL)</name>
    <dbReference type="NCBI Taxonomy" id="93062"/>
    <lineage>
        <taxon>Bacteria</taxon>
        <taxon>Bacillati</taxon>
        <taxon>Bacillota</taxon>
        <taxon>Bacilli</taxon>
        <taxon>Bacillales</taxon>
        <taxon>Staphylococcaceae</taxon>
        <taxon>Staphylococcus</taxon>
    </lineage>
</organism>
<protein>
    <recommendedName>
        <fullName evidence="1">Large ribosomal subunit protein uL30</fullName>
    </recommendedName>
    <alternativeName>
        <fullName evidence="2">50S ribosomal protein L30</fullName>
    </alternativeName>
</protein>